<comment type="function">
    <text evidence="1">Has flap endonuclease activity. During DNA replication, flap endonucleases cleave the 5'-overhanging flap structure that is generated by displacement synthesis when DNA polymerase encounters the 5'-end of a downstream Okazaki fragment.</text>
</comment>
<comment type="cofactor">
    <cofactor evidence="1">
        <name>Mg(2+)</name>
        <dbReference type="ChEBI" id="CHEBI:18420"/>
    </cofactor>
    <text evidence="1">Binds 2 Mg(2+) per subunit. Only one magnesium ion has a direct interaction with the protein, the other interactions are indirect.</text>
</comment>
<comment type="cofactor">
    <cofactor evidence="1">
        <name>K(+)</name>
        <dbReference type="ChEBI" id="CHEBI:29103"/>
    </cofactor>
    <text evidence="1">Binds 1 K(+) per subunit. The potassium ion strongly increases the affinity for DNA.</text>
</comment>
<comment type="similarity">
    <text evidence="1">Belongs to the Xni family.</text>
</comment>
<protein>
    <recommendedName>
        <fullName evidence="1">Flap endonuclease Xni</fullName>
        <shortName evidence="1">FEN</shortName>
        <ecNumber evidence="1">3.1.-.-</ecNumber>
    </recommendedName>
</protein>
<gene>
    <name evidence="1" type="primary">xni</name>
    <name evidence="1" type="synonym">ygdG</name>
    <name type="ordered locus">Shewmr7_2784</name>
</gene>
<organism>
    <name type="scientific">Shewanella sp. (strain MR-7)</name>
    <dbReference type="NCBI Taxonomy" id="60481"/>
    <lineage>
        <taxon>Bacteria</taxon>
        <taxon>Pseudomonadati</taxon>
        <taxon>Pseudomonadota</taxon>
        <taxon>Gammaproteobacteria</taxon>
        <taxon>Alteromonadales</taxon>
        <taxon>Shewanellaceae</taxon>
        <taxon>Shewanella</taxon>
    </lineage>
</organism>
<dbReference type="EC" id="3.1.-.-" evidence="1"/>
<dbReference type="EMBL" id="CP000444">
    <property type="protein sequence ID" value="ABI43769.1"/>
    <property type="molecule type" value="Genomic_DNA"/>
</dbReference>
<dbReference type="SMR" id="Q0HSY6"/>
<dbReference type="KEGG" id="shm:Shewmr7_2784"/>
<dbReference type="HOGENOM" id="CLU_004675_1_2_6"/>
<dbReference type="GO" id="GO:0008409">
    <property type="term" value="F:5'-3' exonuclease activity"/>
    <property type="evidence" value="ECO:0007669"/>
    <property type="project" value="InterPro"/>
</dbReference>
<dbReference type="GO" id="GO:0017108">
    <property type="term" value="F:5'-flap endonuclease activity"/>
    <property type="evidence" value="ECO:0007669"/>
    <property type="project" value="UniProtKB-UniRule"/>
</dbReference>
<dbReference type="GO" id="GO:0003677">
    <property type="term" value="F:DNA binding"/>
    <property type="evidence" value="ECO:0007669"/>
    <property type="project" value="UniProtKB-UniRule"/>
</dbReference>
<dbReference type="GO" id="GO:0000287">
    <property type="term" value="F:magnesium ion binding"/>
    <property type="evidence" value="ECO:0007669"/>
    <property type="project" value="UniProtKB-UniRule"/>
</dbReference>
<dbReference type="GO" id="GO:0030955">
    <property type="term" value="F:potassium ion binding"/>
    <property type="evidence" value="ECO:0007669"/>
    <property type="project" value="UniProtKB-UniRule"/>
</dbReference>
<dbReference type="GO" id="GO:0033567">
    <property type="term" value="P:DNA replication, Okazaki fragment processing"/>
    <property type="evidence" value="ECO:0007669"/>
    <property type="project" value="UniProtKB-UniRule"/>
</dbReference>
<dbReference type="CDD" id="cd09898">
    <property type="entry name" value="H3TH_53EXO"/>
    <property type="match status" value="1"/>
</dbReference>
<dbReference type="CDD" id="cd09859">
    <property type="entry name" value="PIN_53EXO"/>
    <property type="match status" value="1"/>
</dbReference>
<dbReference type="FunFam" id="1.10.150.20:FF:000003">
    <property type="entry name" value="DNA polymerase I"/>
    <property type="match status" value="1"/>
</dbReference>
<dbReference type="FunFam" id="3.40.50.1010:FF:000132">
    <property type="entry name" value="Flap endonuclease Xni"/>
    <property type="match status" value="1"/>
</dbReference>
<dbReference type="Gene3D" id="1.10.150.20">
    <property type="entry name" value="5' to 3' exonuclease, C-terminal subdomain"/>
    <property type="match status" value="1"/>
</dbReference>
<dbReference type="Gene3D" id="3.40.50.1010">
    <property type="entry name" value="5'-nuclease"/>
    <property type="match status" value="1"/>
</dbReference>
<dbReference type="HAMAP" id="MF_01192">
    <property type="entry name" value="Xni"/>
    <property type="match status" value="1"/>
</dbReference>
<dbReference type="InterPro" id="IPR020046">
    <property type="entry name" value="5-3_exonucl_a-hlix_arch_N"/>
</dbReference>
<dbReference type="InterPro" id="IPR002421">
    <property type="entry name" value="5-3_exonuclease"/>
</dbReference>
<dbReference type="InterPro" id="IPR036279">
    <property type="entry name" value="5-3_exonuclease_C_sf"/>
</dbReference>
<dbReference type="InterPro" id="IPR020045">
    <property type="entry name" value="DNA_polI_H3TH"/>
</dbReference>
<dbReference type="InterPro" id="IPR038969">
    <property type="entry name" value="FEN"/>
</dbReference>
<dbReference type="InterPro" id="IPR008918">
    <property type="entry name" value="HhH2"/>
</dbReference>
<dbReference type="InterPro" id="IPR029060">
    <property type="entry name" value="PIN-like_dom_sf"/>
</dbReference>
<dbReference type="InterPro" id="IPR022895">
    <property type="entry name" value="Xni"/>
</dbReference>
<dbReference type="NCBIfam" id="NF007017">
    <property type="entry name" value="PRK09482.1"/>
    <property type="match status" value="1"/>
</dbReference>
<dbReference type="PANTHER" id="PTHR42646:SF2">
    <property type="entry name" value="5'-3' EXONUCLEASE FAMILY PROTEIN"/>
    <property type="match status" value="1"/>
</dbReference>
<dbReference type="PANTHER" id="PTHR42646">
    <property type="entry name" value="FLAP ENDONUCLEASE XNI"/>
    <property type="match status" value="1"/>
</dbReference>
<dbReference type="Pfam" id="PF01367">
    <property type="entry name" value="5_3_exonuc"/>
    <property type="match status" value="1"/>
</dbReference>
<dbReference type="Pfam" id="PF02739">
    <property type="entry name" value="5_3_exonuc_N"/>
    <property type="match status" value="1"/>
</dbReference>
<dbReference type="SMART" id="SM00475">
    <property type="entry name" value="53EXOc"/>
    <property type="match status" value="1"/>
</dbReference>
<dbReference type="SMART" id="SM00279">
    <property type="entry name" value="HhH2"/>
    <property type="match status" value="1"/>
</dbReference>
<dbReference type="SUPFAM" id="SSF47807">
    <property type="entry name" value="5' to 3' exonuclease, C-terminal subdomain"/>
    <property type="match status" value="1"/>
</dbReference>
<dbReference type="SUPFAM" id="SSF88723">
    <property type="entry name" value="PIN domain-like"/>
    <property type="match status" value="1"/>
</dbReference>
<proteinExistence type="inferred from homology"/>
<feature type="chain" id="PRO_0000297880" description="Flap endonuclease Xni">
    <location>
        <begin position="1"/>
        <end position="260"/>
    </location>
</feature>
<feature type="domain" description="5'-3' exonuclease" evidence="1">
    <location>
        <begin position="164"/>
        <end position="259"/>
    </location>
</feature>
<feature type="region of interest" description="Interaction with DNA" evidence="1">
    <location>
        <begin position="185"/>
        <end position="190"/>
    </location>
</feature>
<feature type="binding site" evidence="1">
    <location>
        <position position="105"/>
    </location>
    <ligand>
        <name>Mg(2+)</name>
        <dbReference type="ChEBI" id="CHEBI:18420"/>
    </ligand>
</feature>
<feature type="binding site" evidence="1">
    <location>
        <position position="172"/>
    </location>
    <ligand>
        <name>K(+)</name>
        <dbReference type="ChEBI" id="CHEBI:29103"/>
    </ligand>
</feature>
<feature type="binding site" evidence="1">
    <location>
        <position position="173"/>
    </location>
    <ligand>
        <name>K(+)</name>
        <dbReference type="ChEBI" id="CHEBI:29103"/>
    </ligand>
</feature>
<feature type="binding site" evidence="1">
    <location>
        <position position="181"/>
    </location>
    <ligand>
        <name>K(+)</name>
        <dbReference type="ChEBI" id="CHEBI:29103"/>
    </ligand>
</feature>
<feature type="binding site" evidence="1">
    <location>
        <position position="183"/>
    </location>
    <ligand>
        <name>K(+)</name>
        <dbReference type="ChEBI" id="CHEBI:29103"/>
    </ligand>
</feature>
<feature type="binding site" evidence="1">
    <location>
        <position position="186"/>
    </location>
    <ligand>
        <name>K(+)</name>
        <dbReference type="ChEBI" id="CHEBI:29103"/>
    </ligand>
</feature>
<evidence type="ECO:0000255" key="1">
    <source>
        <dbReference type="HAMAP-Rule" id="MF_01192"/>
    </source>
</evidence>
<name>XNI_SHESR</name>
<keyword id="KW-0238">DNA-binding</keyword>
<keyword id="KW-0255">Endonuclease</keyword>
<keyword id="KW-0378">Hydrolase</keyword>
<keyword id="KW-0460">Magnesium</keyword>
<keyword id="KW-0479">Metal-binding</keyword>
<keyword id="KW-0540">Nuclease</keyword>
<keyword id="KW-0630">Potassium</keyword>
<accession>Q0HSY6</accession>
<reference key="1">
    <citation type="submission" date="2006-08" db="EMBL/GenBank/DDBJ databases">
        <title>Complete sequence of chromosome 1 of Shewanella sp. MR-7.</title>
        <authorList>
            <person name="Copeland A."/>
            <person name="Lucas S."/>
            <person name="Lapidus A."/>
            <person name="Barry K."/>
            <person name="Detter J.C."/>
            <person name="Glavina del Rio T."/>
            <person name="Hammon N."/>
            <person name="Israni S."/>
            <person name="Dalin E."/>
            <person name="Tice H."/>
            <person name="Pitluck S."/>
            <person name="Kiss H."/>
            <person name="Brettin T."/>
            <person name="Bruce D."/>
            <person name="Han C."/>
            <person name="Tapia R."/>
            <person name="Gilna P."/>
            <person name="Schmutz J."/>
            <person name="Larimer F."/>
            <person name="Land M."/>
            <person name="Hauser L."/>
            <person name="Kyrpides N."/>
            <person name="Mikhailova N."/>
            <person name="Nealson K."/>
            <person name="Konstantinidis K."/>
            <person name="Klappenbach J."/>
            <person name="Tiedje J."/>
            <person name="Richardson P."/>
        </authorList>
    </citation>
    <scope>NUCLEOTIDE SEQUENCE [LARGE SCALE GENOMIC DNA]</scope>
    <source>
        <strain>MR-7</strain>
    </source>
</reference>
<sequence>MNKFLIIDGLNLVRRIYAAIPDENDMDSLTDRVSVACTKLLRIHHPTHVAIVWDGDEISWRKQLYPDYKKGRKPMPEPLAAGLSALQEHLKSLPIQSIYAAAEADDVIATLAMKTAKAQGEAVIVSTDKGFSQLNHPRISQWDHFNQQYLNIAELEQKLGVDRNQFLDLMALAGDSGNKIPGIAGIGPKSAAELLRTFRTLATLFSSLSNLGAKQAKKLAEGRDMARLSYKLAQLQTDLPLNINLRDFRVNGPANTQQAE</sequence>